<evidence type="ECO:0000256" key="1">
    <source>
        <dbReference type="SAM" id="MobiDB-lite"/>
    </source>
</evidence>
<name>YL016_HUMAN</name>
<accession>Q0VFX4</accession>
<sequence>MLKKPSSLEQWEILGTSSGEFRCISRDCPGAGNNNREPSISTRGRTSSSKMVLPHPKVAEEAVGGPQSCKWLSCGLQGTGGGHLEGHPPRVSQESAPAGHTGISPSSSGVHLIQAKTAGWPQRVSSAEQCLLPIQHVPGADFLHVFTLRLHCGPARNAKLVEALFNSNSSC</sequence>
<reference key="1">
    <citation type="journal article" date="2004" name="Genome Res.">
        <title>The status, quality, and expansion of the NIH full-length cDNA project: the Mammalian Gene Collection (MGC).</title>
        <authorList>
            <consortium name="The MGC Project Team"/>
        </authorList>
    </citation>
    <scope>NUCLEOTIDE SEQUENCE [LARGE SCALE MRNA]</scope>
</reference>
<feature type="chain" id="PRO_0000344362" description="Putative uncharacterized protein LOC100128554">
    <location>
        <begin position="1"/>
        <end position="171"/>
    </location>
</feature>
<feature type="region of interest" description="Disordered" evidence="1">
    <location>
        <begin position="27"/>
        <end position="53"/>
    </location>
</feature>
<feature type="region of interest" description="Disordered" evidence="1">
    <location>
        <begin position="82"/>
        <end position="108"/>
    </location>
</feature>
<feature type="compositionally biased region" description="Polar residues" evidence="1">
    <location>
        <begin position="32"/>
        <end position="50"/>
    </location>
</feature>
<protein>
    <recommendedName>
        <fullName>Putative uncharacterized protein LOC100128554</fullName>
    </recommendedName>
</protein>
<organism>
    <name type="scientific">Homo sapiens</name>
    <name type="common">Human</name>
    <dbReference type="NCBI Taxonomy" id="9606"/>
    <lineage>
        <taxon>Eukaryota</taxon>
        <taxon>Metazoa</taxon>
        <taxon>Chordata</taxon>
        <taxon>Craniata</taxon>
        <taxon>Vertebrata</taxon>
        <taxon>Euteleostomi</taxon>
        <taxon>Mammalia</taxon>
        <taxon>Eutheria</taxon>
        <taxon>Euarchontoglires</taxon>
        <taxon>Primates</taxon>
        <taxon>Haplorrhini</taxon>
        <taxon>Catarrhini</taxon>
        <taxon>Hominidae</taxon>
        <taxon>Homo</taxon>
    </lineage>
</organism>
<dbReference type="EMBL" id="BC118583">
    <property type="protein sequence ID" value="AAI18584.1"/>
    <property type="molecule type" value="mRNA"/>
</dbReference>
<dbReference type="IntAct" id="Q0VFX4">
    <property type="interactions" value="7"/>
</dbReference>
<dbReference type="BioMuta" id="-"/>
<dbReference type="AGR" id="HGNC:53269"/>
<dbReference type="neXtProt" id="NX_Q0VFX4"/>
<dbReference type="InParanoid" id="Q0VFX4"/>
<dbReference type="PAN-GO" id="Q0VFX4">
    <property type="GO annotations" value="0 GO annotations based on evolutionary models"/>
</dbReference>
<dbReference type="PathwayCommons" id="Q0VFX4"/>
<dbReference type="Pharos" id="Q0VFX4">
    <property type="development level" value="Tdark"/>
</dbReference>
<dbReference type="Proteomes" id="UP000005640">
    <property type="component" value="Unplaced"/>
</dbReference>
<dbReference type="RNAct" id="Q0VFX4">
    <property type="molecule type" value="protein"/>
</dbReference>
<proteinExistence type="evidence at transcript level"/>
<keyword id="KW-1185">Reference proteome</keyword>